<keyword id="KW-0067">ATP-binding</keyword>
<keyword id="KW-0315">Glutamine amidotransferase</keyword>
<keyword id="KW-0436">Ligase</keyword>
<keyword id="KW-0460">Magnesium</keyword>
<keyword id="KW-0479">Metal-binding</keyword>
<keyword id="KW-0547">Nucleotide-binding</keyword>
<keyword id="KW-0665">Pyrimidine biosynthesis</keyword>
<keyword id="KW-1185">Reference proteome</keyword>
<accession>A5FXW7</accession>
<gene>
    <name evidence="1" type="primary">pyrG</name>
    <name type="ordered locus">Acry_1238</name>
</gene>
<organism>
    <name type="scientific">Acidiphilium cryptum (strain JF-5)</name>
    <dbReference type="NCBI Taxonomy" id="349163"/>
    <lineage>
        <taxon>Bacteria</taxon>
        <taxon>Pseudomonadati</taxon>
        <taxon>Pseudomonadota</taxon>
        <taxon>Alphaproteobacteria</taxon>
        <taxon>Acetobacterales</taxon>
        <taxon>Acidocellaceae</taxon>
        <taxon>Acidiphilium</taxon>
    </lineage>
</organism>
<name>PYRG_ACICJ</name>
<comment type="function">
    <text evidence="1">Catalyzes the ATP-dependent amination of UTP to CTP with either L-glutamine or ammonia as the source of nitrogen. Regulates intracellular CTP levels through interactions with the four ribonucleotide triphosphates.</text>
</comment>
<comment type="catalytic activity">
    <reaction evidence="1">
        <text>UTP + L-glutamine + ATP + H2O = CTP + L-glutamate + ADP + phosphate + 2 H(+)</text>
        <dbReference type="Rhea" id="RHEA:26426"/>
        <dbReference type="ChEBI" id="CHEBI:15377"/>
        <dbReference type="ChEBI" id="CHEBI:15378"/>
        <dbReference type="ChEBI" id="CHEBI:29985"/>
        <dbReference type="ChEBI" id="CHEBI:30616"/>
        <dbReference type="ChEBI" id="CHEBI:37563"/>
        <dbReference type="ChEBI" id="CHEBI:43474"/>
        <dbReference type="ChEBI" id="CHEBI:46398"/>
        <dbReference type="ChEBI" id="CHEBI:58359"/>
        <dbReference type="ChEBI" id="CHEBI:456216"/>
        <dbReference type="EC" id="6.3.4.2"/>
    </reaction>
</comment>
<comment type="catalytic activity">
    <reaction evidence="1">
        <text>L-glutamine + H2O = L-glutamate + NH4(+)</text>
        <dbReference type="Rhea" id="RHEA:15889"/>
        <dbReference type="ChEBI" id="CHEBI:15377"/>
        <dbReference type="ChEBI" id="CHEBI:28938"/>
        <dbReference type="ChEBI" id="CHEBI:29985"/>
        <dbReference type="ChEBI" id="CHEBI:58359"/>
    </reaction>
</comment>
<comment type="catalytic activity">
    <reaction evidence="1">
        <text>UTP + NH4(+) + ATP = CTP + ADP + phosphate + 2 H(+)</text>
        <dbReference type="Rhea" id="RHEA:16597"/>
        <dbReference type="ChEBI" id="CHEBI:15378"/>
        <dbReference type="ChEBI" id="CHEBI:28938"/>
        <dbReference type="ChEBI" id="CHEBI:30616"/>
        <dbReference type="ChEBI" id="CHEBI:37563"/>
        <dbReference type="ChEBI" id="CHEBI:43474"/>
        <dbReference type="ChEBI" id="CHEBI:46398"/>
        <dbReference type="ChEBI" id="CHEBI:456216"/>
    </reaction>
</comment>
<comment type="activity regulation">
    <text evidence="1">Allosterically activated by GTP, when glutamine is the substrate; GTP has no effect on the reaction when ammonia is the substrate. The allosteric effector GTP functions by stabilizing the protein conformation that binds the tetrahedral intermediate(s) formed during glutamine hydrolysis. Inhibited by the product CTP, via allosteric rather than competitive inhibition.</text>
</comment>
<comment type="pathway">
    <text evidence="1">Pyrimidine metabolism; CTP biosynthesis via de novo pathway; CTP from UDP: step 2/2.</text>
</comment>
<comment type="subunit">
    <text evidence="1">Homotetramer.</text>
</comment>
<comment type="miscellaneous">
    <text evidence="1">CTPSs have evolved a hybrid strategy for distinguishing between UTP and CTP. The overlapping regions of the product feedback inhibitory and substrate sites recognize a common feature in both compounds, the triphosphate moiety. To differentiate isosteric substrate and product pyrimidine rings, an additional pocket far from the expected kinase/ligase catalytic site, specifically recognizes the cytosine and ribose portions of the product inhibitor.</text>
</comment>
<comment type="similarity">
    <text evidence="1">Belongs to the CTP synthase family.</text>
</comment>
<evidence type="ECO:0000255" key="1">
    <source>
        <dbReference type="HAMAP-Rule" id="MF_01227"/>
    </source>
</evidence>
<reference key="1">
    <citation type="submission" date="2007-05" db="EMBL/GenBank/DDBJ databases">
        <title>Complete sequence of chromosome of Acidiphilium cryptum JF-5.</title>
        <authorList>
            <consortium name="US DOE Joint Genome Institute"/>
            <person name="Copeland A."/>
            <person name="Lucas S."/>
            <person name="Lapidus A."/>
            <person name="Barry K."/>
            <person name="Detter J.C."/>
            <person name="Glavina del Rio T."/>
            <person name="Hammon N."/>
            <person name="Israni S."/>
            <person name="Dalin E."/>
            <person name="Tice H."/>
            <person name="Pitluck S."/>
            <person name="Sims D."/>
            <person name="Brettin T."/>
            <person name="Bruce D."/>
            <person name="Han C."/>
            <person name="Schmutz J."/>
            <person name="Larimer F."/>
            <person name="Land M."/>
            <person name="Hauser L."/>
            <person name="Kyrpides N."/>
            <person name="Kim E."/>
            <person name="Magnuson T."/>
            <person name="Richardson P."/>
        </authorList>
    </citation>
    <scope>NUCLEOTIDE SEQUENCE [LARGE SCALE GENOMIC DNA]</scope>
    <source>
        <strain>JF-5</strain>
    </source>
</reference>
<protein>
    <recommendedName>
        <fullName evidence="1">CTP synthase</fullName>
        <ecNumber evidence="1">6.3.4.2</ecNumber>
    </recommendedName>
    <alternativeName>
        <fullName evidence="1">Cytidine 5'-triphosphate synthase</fullName>
    </alternativeName>
    <alternativeName>
        <fullName evidence="1">Cytidine triphosphate synthetase</fullName>
        <shortName evidence="1">CTP synthetase</shortName>
        <shortName evidence="1">CTPS</shortName>
    </alternativeName>
    <alternativeName>
        <fullName evidence="1">UTP--ammonia ligase</fullName>
    </alternativeName>
</protein>
<sequence>MTRYVFITGGVVSSLGKGIASASLGALLQARGYSVRLRKLDPYLNVDPGTMSPYQHGEVFVTDDGAETDLDLGHYERFTGVHATKSDNATTGRIYSEVIARERRGDYLGATVQVIPHITDAIKQAILRETAGLDFVLVEIGGTVGDIESLPFLEAIRQLGNELGPHDAMFVHLTLVPYIPSAGELKTKPTQHSVKELLNVGIQPHMLICRCDRPIPEGERRKIALFCNVRPEAVVPALDVGTIYEVPISYHEAGLDREVLRHFGLPHDAEPDLGRWRRIVETVRNPEGEVTIAVVGKYTNLLDSYKSLGEALTHGGIANRVRVRLDWVDSEIFEQPGAVARLDGVHGILVPGGFGERGTGGKIEAVRFARERHVPFLGICFGMQMAVIEAARNLAGLPGASSTEFGPCEVPVVGLLTEWARGNEIERRAAEGDLGGTMRLGAYAATLVEGSLVRAVYGDAATIEERHRHRYEVNIHYRERLESAGLRFSGLSPDGLLPEIVEYPDHPWFIGVQYHPELKSKPFDPHPLFAGFIEAAVKQMRLV</sequence>
<dbReference type="EC" id="6.3.4.2" evidence="1"/>
<dbReference type="EMBL" id="CP000697">
    <property type="protein sequence ID" value="ABQ30449.1"/>
    <property type="molecule type" value="Genomic_DNA"/>
</dbReference>
<dbReference type="RefSeq" id="WP_007424662.1">
    <property type="nucleotide sequence ID" value="NC_009484.1"/>
</dbReference>
<dbReference type="SMR" id="A5FXW7"/>
<dbReference type="STRING" id="349163.Acry_1238"/>
<dbReference type="MEROPS" id="C26.964"/>
<dbReference type="KEGG" id="acr:Acry_1238"/>
<dbReference type="eggNOG" id="COG0504">
    <property type="taxonomic scope" value="Bacteria"/>
</dbReference>
<dbReference type="HOGENOM" id="CLU_011675_5_0_5"/>
<dbReference type="UniPathway" id="UPA00159">
    <property type="reaction ID" value="UER00277"/>
</dbReference>
<dbReference type="Proteomes" id="UP000000245">
    <property type="component" value="Chromosome"/>
</dbReference>
<dbReference type="GO" id="GO:0005829">
    <property type="term" value="C:cytosol"/>
    <property type="evidence" value="ECO:0007669"/>
    <property type="project" value="TreeGrafter"/>
</dbReference>
<dbReference type="GO" id="GO:0005524">
    <property type="term" value="F:ATP binding"/>
    <property type="evidence" value="ECO:0007669"/>
    <property type="project" value="UniProtKB-KW"/>
</dbReference>
<dbReference type="GO" id="GO:0003883">
    <property type="term" value="F:CTP synthase activity"/>
    <property type="evidence" value="ECO:0007669"/>
    <property type="project" value="UniProtKB-UniRule"/>
</dbReference>
<dbReference type="GO" id="GO:0004359">
    <property type="term" value="F:glutaminase activity"/>
    <property type="evidence" value="ECO:0007669"/>
    <property type="project" value="RHEA"/>
</dbReference>
<dbReference type="GO" id="GO:0042802">
    <property type="term" value="F:identical protein binding"/>
    <property type="evidence" value="ECO:0007669"/>
    <property type="project" value="TreeGrafter"/>
</dbReference>
<dbReference type="GO" id="GO:0046872">
    <property type="term" value="F:metal ion binding"/>
    <property type="evidence" value="ECO:0007669"/>
    <property type="project" value="UniProtKB-KW"/>
</dbReference>
<dbReference type="GO" id="GO:0044210">
    <property type="term" value="P:'de novo' CTP biosynthetic process"/>
    <property type="evidence" value="ECO:0007669"/>
    <property type="project" value="UniProtKB-UniRule"/>
</dbReference>
<dbReference type="GO" id="GO:0019856">
    <property type="term" value="P:pyrimidine nucleobase biosynthetic process"/>
    <property type="evidence" value="ECO:0007669"/>
    <property type="project" value="TreeGrafter"/>
</dbReference>
<dbReference type="CDD" id="cd03113">
    <property type="entry name" value="CTPS_N"/>
    <property type="match status" value="1"/>
</dbReference>
<dbReference type="CDD" id="cd01746">
    <property type="entry name" value="GATase1_CTP_Synthase"/>
    <property type="match status" value="1"/>
</dbReference>
<dbReference type="FunFam" id="3.40.50.300:FF:000009">
    <property type="entry name" value="CTP synthase"/>
    <property type="match status" value="1"/>
</dbReference>
<dbReference type="FunFam" id="3.40.50.880:FF:000002">
    <property type="entry name" value="CTP synthase"/>
    <property type="match status" value="1"/>
</dbReference>
<dbReference type="Gene3D" id="3.40.50.880">
    <property type="match status" value="1"/>
</dbReference>
<dbReference type="Gene3D" id="3.40.50.300">
    <property type="entry name" value="P-loop containing nucleotide triphosphate hydrolases"/>
    <property type="match status" value="1"/>
</dbReference>
<dbReference type="HAMAP" id="MF_01227">
    <property type="entry name" value="PyrG"/>
    <property type="match status" value="1"/>
</dbReference>
<dbReference type="InterPro" id="IPR029062">
    <property type="entry name" value="Class_I_gatase-like"/>
</dbReference>
<dbReference type="InterPro" id="IPR004468">
    <property type="entry name" value="CTP_synthase"/>
</dbReference>
<dbReference type="InterPro" id="IPR017456">
    <property type="entry name" value="CTP_synthase_N"/>
</dbReference>
<dbReference type="InterPro" id="IPR017926">
    <property type="entry name" value="GATASE"/>
</dbReference>
<dbReference type="InterPro" id="IPR033828">
    <property type="entry name" value="GATase1_CTP_Synthase"/>
</dbReference>
<dbReference type="InterPro" id="IPR027417">
    <property type="entry name" value="P-loop_NTPase"/>
</dbReference>
<dbReference type="NCBIfam" id="NF003792">
    <property type="entry name" value="PRK05380.1"/>
    <property type="match status" value="1"/>
</dbReference>
<dbReference type="NCBIfam" id="TIGR00337">
    <property type="entry name" value="PyrG"/>
    <property type="match status" value="1"/>
</dbReference>
<dbReference type="PANTHER" id="PTHR11550">
    <property type="entry name" value="CTP SYNTHASE"/>
    <property type="match status" value="1"/>
</dbReference>
<dbReference type="PANTHER" id="PTHR11550:SF0">
    <property type="entry name" value="CTP SYNTHASE-RELATED"/>
    <property type="match status" value="1"/>
</dbReference>
<dbReference type="Pfam" id="PF06418">
    <property type="entry name" value="CTP_synth_N"/>
    <property type="match status" value="1"/>
</dbReference>
<dbReference type="Pfam" id="PF00117">
    <property type="entry name" value="GATase"/>
    <property type="match status" value="1"/>
</dbReference>
<dbReference type="SUPFAM" id="SSF52317">
    <property type="entry name" value="Class I glutamine amidotransferase-like"/>
    <property type="match status" value="1"/>
</dbReference>
<dbReference type="SUPFAM" id="SSF52540">
    <property type="entry name" value="P-loop containing nucleoside triphosphate hydrolases"/>
    <property type="match status" value="1"/>
</dbReference>
<dbReference type="PROSITE" id="PS51273">
    <property type="entry name" value="GATASE_TYPE_1"/>
    <property type="match status" value="1"/>
</dbReference>
<proteinExistence type="inferred from homology"/>
<feature type="chain" id="PRO_1000139362" description="CTP synthase">
    <location>
        <begin position="1"/>
        <end position="543"/>
    </location>
</feature>
<feature type="domain" description="Glutamine amidotransferase type-1" evidence="1">
    <location>
        <begin position="291"/>
        <end position="542"/>
    </location>
</feature>
<feature type="region of interest" description="Amidoligase domain" evidence="1">
    <location>
        <begin position="1"/>
        <end position="265"/>
    </location>
</feature>
<feature type="active site" description="Nucleophile; for glutamine hydrolysis" evidence="1">
    <location>
        <position position="380"/>
    </location>
</feature>
<feature type="active site" evidence="1">
    <location>
        <position position="515"/>
    </location>
</feature>
<feature type="active site" evidence="1">
    <location>
        <position position="517"/>
    </location>
</feature>
<feature type="binding site" evidence="1">
    <location>
        <position position="13"/>
    </location>
    <ligand>
        <name>CTP</name>
        <dbReference type="ChEBI" id="CHEBI:37563"/>
        <note>allosteric inhibitor</note>
    </ligand>
</feature>
<feature type="binding site" evidence="1">
    <location>
        <position position="13"/>
    </location>
    <ligand>
        <name>UTP</name>
        <dbReference type="ChEBI" id="CHEBI:46398"/>
    </ligand>
</feature>
<feature type="binding site" evidence="1">
    <location>
        <begin position="14"/>
        <end position="19"/>
    </location>
    <ligand>
        <name>ATP</name>
        <dbReference type="ChEBI" id="CHEBI:30616"/>
    </ligand>
</feature>
<feature type="binding site" evidence="1">
    <location>
        <position position="54"/>
    </location>
    <ligand>
        <name>L-glutamine</name>
        <dbReference type="ChEBI" id="CHEBI:58359"/>
    </ligand>
</feature>
<feature type="binding site" evidence="1">
    <location>
        <position position="71"/>
    </location>
    <ligand>
        <name>ATP</name>
        <dbReference type="ChEBI" id="CHEBI:30616"/>
    </ligand>
</feature>
<feature type="binding site" evidence="1">
    <location>
        <position position="71"/>
    </location>
    <ligand>
        <name>Mg(2+)</name>
        <dbReference type="ChEBI" id="CHEBI:18420"/>
    </ligand>
</feature>
<feature type="binding site" evidence="1">
    <location>
        <position position="139"/>
    </location>
    <ligand>
        <name>Mg(2+)</name>
        <dbReference type="ChEBI" id="CHEBI:18420"/>
    </ligand>
</feature>
<feature type="binding site" evidence="1">
    <location>
        <begin position="146"/>
        <end position="148"/>
    </location>
    <ligand>
        <name>CTP</name>
        <dbReference type="ChEBI" id="CHEBI:37563"/>
        <note>allosteric inhibitor</note>
    </ligand>
</feature>
<feature type="binding site" evidence="1">
    <location>
        <begin position="186"/>
        <end position="191"/>
    </location>
    <ligand>
        <name>CTP</name>
        <dbReference type="ChEBI" id="CHEBI:37563"/>
        <note>allosteric inhibitor</note>
    </ligand>
</feature>
<feature type="binding site" evidence="1">
    <location>
        <begin position="186"/>
        <end position="191"/>
    </location>
    <ligand>
        <name>UTP</name>
        <dbReference type="ChEBI" id="CHEBI:46398"/>
    </ligand>
</feature>
<feature type="binding site" evidence="1">
    <location>
        <position position="222"/>
    </location>
    <ligand>
        <name>CTP</name>
        <dbReference type="ChEBI" id="CHEBI:37563"/>
        <note>allosteric inhibitor</note>
    </ligand>
</feature>
<feature type="binding site" evidence="1">
    <location>
        <position position="222"/>
    </location>
    <ligand>
        <name>UTP</name>
        <dbReference type="ChEBI" id="CHEBI:46398"/>
    </ligand>
</feature>
<feature type="binding site" evidence="1">
    <location>
        <position position="240"/>
    </location>
    <ligand>
        <name>ATP</name>
        <dbReference type="ChEBI" id="CHEBI:30616"/>
    </ligand>
</feature>
<feature type="binding site" evidence="1">
    <location>
        <position position="353"/>
    </location>
    <ligand>
        <name>L-glutamine</name>
        <dbReference type="ChEBI" id="CHEBI:58359"/>
    </ligand>
</feature>
<feature type="binding site" evidence="1">
    <location>
        <begin position="381"/>
        <end position="384"/>
    </location>
    <ligand>
        <name>L-glutamine</name>
        <dbReference type="ChEBI" id="CHEBI:58359"/>
    </ligand>
</feature>
<feature type="binding site" evidence="1">
    <location>
        <position position="404"/>
    </location>
    <ligand>
        <name>L-glutamine</name>
        <dbReference type="ChEBI" id="CHEBI:58359"/>
    </ligand>
</feature>
<feature type="binding site" evidence="1">
    <location>
        <position position="470"/>
    </location>
    <ligand>
        <name>L-glutamine</name>
        <dbReference type="ChEBI" id="CHEBI:58359"/>
    </ligand>
</feature>